<accession>P08824</accession>
<evidence type="ECO:0000305" key="1"/>
<feature type="chain" id="PRO_0000063630" description="RuBisCO large subunit-binding protein subunit alpha">
    <location>
        <begin position="1" status="less than"/>
        <end position="495" status="greater than"/>
    </location>
</feature>
<feature type="non-terminal residue">
    <location>
        <position position="1"/>
    </location>
</feature>
<feature type="non-terminal residue">
    <location>
        <position position="495"/>
    </location>
</feature>
<sequence>RTALQSGIDKLADAVGLTLGPRGRNVVLDEFGSPKVVNEGVTIARAIELPDPMENAGAALIREVASKTNDSAGDGTTTASVLAREIIKLGLLSVTSGANPVSIKRGIDKTVQGLIEELEKKARPVKGRDDIKAVASISAGNDELIGTMIADAIDKVGPDGVLSIESSSSFETTVEVEEGMEIDRGYISPQFVTNPEKLICEFENARVLVTDQKITAIKDIIPLLEKTTQLRAPLLIIAEDVTGEALATLVVNKMRGILNVAAIKAPGFGERRKALLQDIAILTGAEFQASDLGLLVENTSVEQLGIARKVTITKDSTTLIADAASKDELQARIAQLKRELAETDSVYDSEKLAERIAKLSGGVAVIKVGAATETELEDRKLRIEDAKNATFAAIEEGIVPGGGAALVHLSTVVPAINGEDKDADERLGADILQKALVAPASLIAQNAGIEGEVVVEKVKAREWEIGYNAMTDKYENLVEAGVIDPAKVTRCALQN</sequence>
<dbReference type="EMBL" id="X07852">
    <property type="protein sequence ID" value="CAB51619.1"/>
    <property type="status" value="ALT_SEQ"/>
    <property type="molecule type" value="mRNA"/>
</dbReference>
<dbReference type="PIR" id="S02199">
    <property type="entry name" value="HHCSBA"/>
</dbReference>
<dbReference type="SMR" id="P08824"/>
<dbReference type="eggNOG" id="KOG0356">
    <property type="taxonomic scope" value="Eukaryota"/>
</dbReference>
<dbReference type="GO" id="GO:0009507">
    <property type="term" value="C:chloroplast"/>
    <property type="evidence" value="ECO:0007669"/>
    <property type="project" value="UniProtKB-SubCell"/>
</dbReference>
<dbReference type="GO" id="GO:0005524">
    <property type="term" value="F:ATP binding"/>
    <property type="evidence" value="ECO:0007669"/>
    <property type="project" value="UniProtKB-KW"/>
</dbReference>
<dbReference type="GO" id="GO:0140662">
    <property type="term" value="F:ATP-dependent protein folding chaperone"/>
    <property type="evidence" value="ECO:0007669"/>
    <property type="project" value="InterPro"/>
</dbReference>
<dbReference type="GO" id="GO:0042026">
    <property type="term" value="P:protein refolding"/>
    <property type="evidence" value="ECO:0007669"/>
    <property type="project" value="InterPro"/>
</dbReference>
<dbReference type="CDD" id="cd03344">
    <property type="entry name" value="GroEL"/>
    <property type="match status" value="1"/>
</dbReference>
<dbReference type="FunFam" id="3.50.7.10:FF:000001">
    <property type="entry name" value="60 kDa chaperonin"/>
    <property type="match status" value="1"/>
</dbReference>
<dbReference type="Gene3D" id="3.50.7.10">
    <property type="entry name" value="GroEL"/>
    <property type="match status" value="1"/>
</dbReference>
<dbReference type="Gene3D" id="1.10.560.10">
    <property type="entry name" value="GroEL-like equatorial domain"/>
    <property type="match status" value="1"/>
</dbReference>
<dbReference type="Gene3D" id="3.30.260.10">
    <property type="entry name" value="TCP-1-like chaperonin intermediate domain"/>
    <property type="match status" value="1"/>
</dbReference>
<dbReference type="InterPro" id="IPR018370">
    <property type="entry name" value="Chaperonin_Cpn60_CS"/>
</dbReference>
<dbReference type="InterPro" id="IPR001844">
    <property type="entry name" value="Cpn60/GroEL"/>
</dbReference>
<dbReference type="InterPro" id="IPR002423">
    <property type="entry name" value="Cpn60/GroEL/TCP-1"/>
</dbReference>
<dbReference type="InterPro" id="IPR027409">
    <property type="entry name" value="GroEL-like_apical_dom_sf"/>
</dbReference>
<dbReference type="InterPro" id="IPR027413">
    <property type="entry name" value="GROEL-like_equatorial_sf"/>
</dbReference>
<dbReference type="InterPro" id="IPR027410">
    <property type="entry name" value="TCP-1-like_intermed_sf"/>
</dbReference>
<dbReference type="NCBIfam" id="TIGR02348">
    <property type="entry name" value="GroEL"/>
    <property type="match status" value="1"/>
</dbReference>
<dbReference type="NCBIfam" id="NF000592">
    <property type="entry name" value="PRK00013.1"/>
    <property type="match status" value="1"/>
</dbReference>
<dbReference type="NCBIfam" id="NF009487">
    <property type="entry name" value="PRK12849.1"/>
    <property type="match status" value="1"/>
</dbReference>
<dbReference type="NCBIfam" id="NF009488">
    <property type="entry name" value="PRK12850.1"/>
    <property type="match status" value="1"/>
</dbReference>
<dbReference type="NCBIfam" id="NF009489">
    <property type="entry name" value="PRK12851.1"/>
    <property type="match status" value="1"/>
</dbReference>
<dbReference type="PANTHER" id="PTHR45633">
    <property type="entry name" value="60 KDA HEAT SHOCK PROTEIN, MITOCHONDRIAL"/>
    <property type="match status" value="1"/>
</dbReference>
<dbReference type="Pfam" id="PF00118">
    <property type="entry name" value="Cpn60_TCP1"/>
    <property type="match status" value="1"/>
</dbReference>
<dbReference type="PRINTS" id="PR00298">
    <property type="entry name" value="CHAPERONIN60"/>
</dbReference>
<dbReference type="SUPFAM" id="SSF52029">
    <property type="entry name" value="GroEL apical domain-like"/>
    <property type="match status" value="1"/>
</dbReference>
<dbReference type="SUPFAM" id="SSF48592">
    <property type="entry name" value="GroEL equatorial domain-like"/>
    <property type="match status" value="1"/>
</dbReference>
<dbReference type="SUPFAM" id="SSF54849">
    <property type="entry name" value="GroEL-intermediate domain like"/>
    <property type="match status" value="2"/>
</dbReference>
<dbReference type="PROSITE" id="PS00296">
    <property type="entry name" value="CHAPERONINS_CPN60"/>
    <property type="match status" value="1"/>
</dbReference>
<comment type="function">
    <text>This protein binds RuBisCO small and large subunits and is implicated in the assembly of the enzyme oligomer.</text>
</comment>
<comment type="subunit">
    <text>Oligomer of probably six alpha and six beta subunits.</text>
</comment>
<comment type="subcellular location">
    <subcellularLocation>
        <location>Plastid</location>
        <location>Chloroplast</location>
    </subcellularLocation>
</comment>
<comment type="miscellaneous">
    <text>This protein shows ATPase activity.</text>
</comment>
<comment type="similarity">
    <text evidence="1">Belongs to the chaperonin (HSP60) family.</text>
</comment>
<organism>
    <name type="scientific">Ricinus communis</name>
    <name type="common">Castor bean</name>
    <dbReference type="NCBI Taxonomy" id="3988"/>
    <lineage>
        <taxon>Eukaryota</taxon>
        <taxon>Viridiplantae</taxon>
        <taxon>Streptophyta</taxon>
        <taxon>Embryophyta</taxon>
        <taxon>Tracheophyta</taxon>
        <taxon>Spermatophyta</taxon>
        <taxon>Magnoliopsida</taxon>
        <taxon>eudicotyledons</taxon>
        <taxon>Gunneridae</taxon>
        <taxon>Pentapetalae</taxon>
        <taxon>rosids</taxon>
        <taxon>fabids</taxon>
        <taxon>Malpighiales</taxon>
        <taxon>Euphorbiaceae</taxon>
        <taxon>Acalyphoideae</taxon>
        <taxon>Acalypheae</taxon>
        <taxon>Ricinus</taxon>
    </lineage>
</organism>
<reference key="1">
    <citation type="journal article" date="1988" name="Nature">
        <title>Homologous plant and bacterial proteins chaperone oligomeric protein assembly.</title>
        <authorList>
            <person name="Hemmingsen S.M."/>
            <person name="Woolford C."/>
            <person name="van der Vies S.M."/>
            <person name="Tilly K."/>
            <person name="Dennis D.T."/>
            <person name="Georgopoulos C."/>
            <person name="Hendrix R.W."/>
            <person name="Ellis R.J."/>
        </authorList>
    </citation>
    <scope>NUCLEOTIDE SEQUENCE [MRNA]</scope>
    <source>
        <tissue>Seed</tissue>
    </source>
</reference>
<protein>
    <recommendedName>
        <fullName>RuBisCO large subunit-binding protein subunit alpha</fullName>
    </recommendedName>
    <alternativeName>
        <fullName>60 kDa chaperonin subunit alpha</fullName>
    </alternativeName>
    <alternativeName>
        <fullName>CPN-60 alpha</fullName>
    </alternativeName>
</protein>
<proteinExistence type="evidence at transcript level"/>
<keyword id="KW-0067">ATP-binding</keyword>
<keyword id="KW-0143">Chaperone</keyword>
<keyword id="KW-0150">Chloroplast</keyword>
<keyword id="KW-0547">Nucleotide-binding</keyword>
<keyword id="KW-0934">Plastid</keyword>
<name>RUBA_RICCO</name>